<reference key="1">
    <citation type="journal article" date="2005" name="Proc. Natl. Acad. Sci. U.S.A.">
        <title>Complete genome sequence of Vibrio fischeri: a symbiotic bacterium with pathogenic congeners.</title>
        <authorList>
            <person name="Ruby E.G."/>
            <person name="Urbanowski M."/>
            <person name="Campbell J."/>
            <person name="Dunn A."/>
            <person name="Faini M."/>
            <person name="Gunsalus R."/>
            <person name="Lostroh P."/>
            <person name="Lupp C."/>
            <person name="McCann J."/>
            <person name="Millikan D."/>
            <person name="Schaefer A."/>
            <person name="Stabb E."/>
            <person name="Stevens A."/>
            <person name="Visick K."/>
            <person name="Whistler C."/>
            <person name="Greenberg E.P."/>
        </authorList>
    </citation>
    <scope>NUCLEOTIDE SEQUENCE [LARGE SCALE GENOMIC DNA]</scope>
    <source>
        <strain>ATCC 700601 / ES114</strain>
    </source>
</reference>
<organism>
    <name type="scientific">Aliivibrio fischeri (strain ATCC 700601 / ES114)</name>
    <name type="common">Vibrio fischeri</name>
    <dbReference type="NCBI Taxonomy" id="312309"/>
    <lineage>
        <taxon>Bacteria</taxon>
        <taxon>Pseudomonadati</taxon>
        <taxon>Pseudomonadota</taxon>
        <taxon>Gammaproteobacteria</taxon>
        <taxon>Vibrionales</taxon>
        <taxon>Vibrionaceae</taxon>
        <taxon>Aliivibrio</taxon>
    </lineage>
</organism>
<gene>
    <name type="primary">tkt1</name>
    <name type="ordered locus">VF_0440</name>
</gene>
<dbReference type="EC" id="2.2.1.1"/>
<dbReference type="EMBL" id="CP000020">
    <property type="protein sequence ID" value="AAW84935.1"/>
    <property type="molecule type" value="Genomic_DNA"/>
</dbReference>
<dbReference type="RefSeq" id="WP_011261222.1">
    <property type="nucleotide sequence ID" value="NC_006840.2"/>
</dbReference>
<dbReference type="RefSeq" id="YP_203823.1">
    <property type="nucleotide sequence ID" value="NC_006840.2"/>
</dbReference>
<dbReference type="SMR" id="Q5E7R1"/>
<dbReference type="STRING" id="312309.VF_0440"/>
<dbReference type="EnsemblBacteria" id="AAW84935">
    <property type="protein sequence ID" value="AAW84935"/>
    <property type="gene ID" value="VF_0440"/>
</dbReference>
<dbReference type="GeneID" id="54163077"/>
<dbReference type="KEGG" id="vfi:VF_0440"/>
<dbReference type="PATRIC" id="fig|312309.11.peg.430"/>
<dbReference type="eggNOG" id="COG0021">
    <property type="taxonomic scope" value="Bacteria"/>
</dbReference>
<dbReference type="HOGENOM" id="CLU_009227_0_0_6"/>
<dbReference type="OrthoDB" id="8732661at2"/>
<dbReference type="Proteomes" id="UP000000537">
    <property type="component" value="Chromosome I"/>
</dbReference>
<dbReference type="GO" id="GO:0005829">
    <property type="term" value="C:cytosol"/>
    <property type="evidence" value="ECO:0007669"/>
    <property type="project" value="TreeGrafter"/>
</dbReference>
<dbReference type="GO" id="GO:0046872">
    <property type="term" value="F:metal ion binding"/>
    <property type="evidence" value="ECO:0007669"/>
    <property type="project" value="UniProtKB-KW"/>
</dbReference>
<dbReference type="GO" id="GO:0004802">
    <property type="term" value="F:transketolase activity"/>
    <property type="evidence" value="ECO:0007669"/>
    <property type="project" value="UniProtKB-EC"/>
</dbReference>
<dbReference type="GO" id="GO:0006098">
    <property type="term" value="P:pentose-phosphate shunt"/>
    <property type="evidence" value="ECO:0007669"/>
    <property type="project" value="TreeGrafter"/>
</dbReference>
<dbReference type="CDD" id="cd07033">
    <property type="entry name" value="TPP_PYR_DXS_TK_like"/>
    <property type="match status" value="1"/>
</dbReference>
<dbReference type="CDD" id="cd02012">
    <property type="entry name" value="TPP_TK"/>
    <property type="match status" value="1"/>
</dbReference>
<dbReference type="FunFam" id="3.40.50.920:FF:000003">
    <property type="entry name" value="Transketolase"/>
    <property type="match status" value="1"/>
</dbReference>
<dbReference type="FunFam" id="3.40.50.970:FF:000003">
    <property type="entry name" value="Transketolase"/>
    <property type="match status" value="1"/>
</dbReference>
<dbReference type="FunFam" id="3.40.50.970:FF:000004">
    <property type="entry name" value="Transketolase"/>
    <property type="match status" value="1"/>
</dbReference>
<dbReference type="Gene3D" id="3.40.50.920">
    <property type="match status" value="1"/>
</dbReference>
<dbReference type="Gene3D" id="3.40.50.970">
    <property type="match status" value="2"/>
</dbReference>
<dbReference type="InterPro" id="IPR029061">
    <property type="entry name" value="THDP-binding"/>
</dbReference>
<dbReference type="InterPro" id="IPR009014">
    <property type="entry name" value="Transketo_C/PFOR_II"/>
</dbReference>
<dbReference type="InterPro" id="IPR055152">
    <property type="entry name" value="Transketolase-like_C_2"/>
</dbReference>
<dbReference type="InterPro" id="IPR005475">
    <property type="entry name" value="Transketolase-like_Pyr-bd"/>
</dbReference>
<dbReference type="InterPro" id="IPR005478">
    <property type="entry name" value="Transketolase_bac-like"/>
</dbReference>
<dbReference type="InterPro" id="IPR020826">
    <property type="entry name" value="Transketolase_BS"/>
</dbReference>
<dbReference type="InterPro" id="IPR049557">
    <property type="entry name" value="Transketolase_CS"/>
</dbReference>
<dbReference type="InterPro" id="IPR033247">
    <property type="entry name" value="Transketolase_fam"/>
</dbReference>
<dbReference type="InterPro" id="IPR005474">
    <property type="entry name" value="Transketolase_N"/>
</dbReference>
<dbReference type="NCBIfam" id="TIGR00232">
    <property type="entry name" value="tktlase_bact"/>
    <property type="match status" value="1"/>
</dbReference>
<dbReference type="PANTHER" id="PTHR43522">
    <property type="entry name" value="TRANSKETOLASE"/>
    <property type="match status" value="1"/>
</dbReference>
<dbReference type="PANTHER" id="PTHR43522:SF2">
    <property type="entry name" value="TRANSKETOLASE 1-RELATED"/>
    <property type="match status" value="1"/>
</dbReference>
<dbReference type="Pfam" id="PF02779">
    <property type="entry name" value="Transket_pyr"/>
    <property type="match status" value="1"/>
</dbReference>
<dbReference type="Pfam" id="PF22613">
    <property type="entry name" value="Transketolase_C_1"/>
    <property type="match status" value="1"/>
</dbReference>
<dbReference type="Pfam" id="PF00456">
    <property type="entry name" value="Transketolase_N"/>
    <property type="match status" value="1"/>
</dbReference>
<dbReference type="SMART" id="SM00861">
    <property type="entry name" value="Transket_pyr"/>
    <property type="match status" value="1"/>
</dbReference>
<dbReference type="SUPFAM" id="SSF52518">
    <property type="entry name" value="Thiamin diphosphate-binding fold (THDP-binding)"/>
    <property type="match status" value="2"/>
</dbReference>
<dbReference type="SUPFAM" id="SSF52922">
    <property type="entry name" value="TK C-terminal domain-like"/>
    <property type="match status" value="1"/>
</dbReference>
<dbReference type="PROSITE" id="PS00801">
    <property type="entry name" value="TRANSKETOLASE_1"/>
    <property type="match status" value="1"/>
</dbReference>
<dbReference type="PROSITE" id="PS00802">
    <property type="entry name" value="TRANSKETOLASE_2"/>
    <property type="match status" value="1"/>
</dbReference>
<keyword id="KW-0106">Calcium</keyword>
<keyword id="KW-0460">Magnesium</keyword>
<keyword id="KW-0479">Metal-binding</keyword>
<keyword id="KW-1185">Reference proteome</keyword>
<keyword id="KW-0786">Thiamine pyrophosphate</keyword>
<keyword id="KW-0808">Transferase</keyword>
<proteinExistence type="inferred from homology"/>
<sequence>MSSRKHLANAIRALSMDGVQQANSGHPGAPMGMADIAEVLWRSHLNHNPQNPEWADRDRFILSNGHGSMLIYSLLHLSGYDLSIEDLKNFRQLHSKTPGHPEYGYAPGVETTTGPLGQGITNGVGMAMAEKALAAQFNREGHDIVDHNTYVFMGDGCLMEGISHEACSLAGTLGLGKLIAFWDDNGISIDGEVEGWFSDDTPKRFEAYGWHVIPAVDGHDSDAINAAIEAAKADPRPSLICTKTVIGFGSPNKQGTHDCHGAPLGAEEIAATKAQLGWEYGAFDIPADVYAGWDAKEVGAEKEAAWNAKFDAYAAAHPELAAEYKRRVNGDLPAEWEEKANTIIADLQANPANIASRKASQNALEAFGAMLPEFMGGSADLAPSNLTMWSGSKSLEANDFSGNYIHYGVREFGMTAIMNGIALHGGFVPYGATFLMFMEYARNAMRMAALMKVQNIQVYTHDSIGLGEDGPTHQPVEQIASLRLTPNMSTWRPCDQVESAVAWKLAIERKDGPSSLIFSRQNLAQQERTQEQVADIAKGAYILKDCEGQPELILIATGSEVELAVEAAAQLTAEGKAVRVVSMPSTDAFDKQDEGYREAVFPSAVTKRIAIEAGIADFWYKYVGFGGKIIGMTTFGESAPADELFKMFGFTTENVVNTAKELLA</sequence>
<comment type="function">
    <text evidence="1">Catalyzes the transfer of a two-carbon ketol group from a ketose donor to an aldose acceptor, via a covalent intermediate with the cofactor thiamine pyrophosphate.</text>
</comment>
<comment type="catalytic activity">
    <reaction>
        <text>D-sedoheptulose 7-phosphate + D-glyceraldehyde 3-phosphate = aldehydo-D-ribose 5-phosphate + D-xylulose 5-phosphate</text>
        <dbReference type="Rhea" id="RHEA:10508"/>
        <dbReference type="ChEBI" id="CHEBI:57483"/>
        <dbReference type="ChEBI" id="CHEBI:57737"/>
        <dbReference type="ChEBI" id="CHEBI:58273"/>
        <dbReference type="ChEBI" id="CHEBI:59776"/>
        <dbReference type="EC" id="2.2.1.1"/>
    </reaction>
</comment>
<comment type="cofactor">
    <cofactor evidence="1">
        <name>Mg(2+)</name>
        <dbReference type="ChEBI" id="CHEBI:18420"/>
    </cofactor>
    <cofactor evidence="1">
        <name>Ca(2+)</name>
        <dbReference type="ChEBI" id="CHEBI:29108"/>
    </cofactor>
    <cofactor evidence="1">
        <name>Mn(2+)</name>
        <dbReference type="ChEBI" id="CHEBI:29035"/>
    </cofactor>
    <cofactor evidence="1">
        <name>Co(2+)</name>
        <dbReference type="ChEBI" id="CHEBI:48828"/>
    </cofactor>
    <text evidence="1">Binds 1 Mg(2+) ion per subunit. Can also utilize other divalent metal cations, such as Ca(2+), Mn(2+) and Co(2+).</text>
</comment>
<comment type="cofactor">
    <cofactor evidence="1">
        <name>thiamine diphosphate</name>
        <dbReference type="ChEBI" id="CHEBI:58937"/>
    </cofactor>
    <text evidence="1">Binds 1 thiamine pyrophosphate per subunit.</text>
</comment>
<comment type="subunit">
    <text evidence="1">Homodimer.</text>
</comment>
<comment type="similarity">
    <text evidence="2">Belongs to the transketolase family.</text>
</comment>
<feature type="chain" id="PRO_0000191882" description="Transketolase 1">
    <location>
        <begin position="1"/>
        <end position="664"/>
    </location>
</feature>
<feature type="active site" description="Proton donor" evidence="1">
    <location>
        <position position="411"/>
    </location>
</feature>
<feature type="binding site" evidence="1">
    <location>
        <position position="26"/>
    </location>
    <ligand>
        <name>substrate</name>
    </ligand>
</feature>
<feature type="binding site" evidence="1">
    <location>
        <position position="66"/>
    </location>
    <ligand>
        <name>thiamine diphosphate</name>
        <dbReference type="ChEBI" id="CHEBI:58937"/>
    </ligand>
</feature>
<feature type="binding site" evidence="1">
    <location>
        <begin position="114"/>
        <end position="116"/>
    </location>
    <ligand>
        <name>thiamine diphosphate</name>
        <dbReference type="ChEBI" id="CHEBI:58937"/>
    </ligand>
</feature>
<feature type="binding site" evidence="1">
    <location>
        <position position="155"/>
    </location>
    <ligand>
        <name>Mg(2+)</name>
        <dbReference type="ChEBI" id="CHEBI:18420"/>
    </ligand>
</feature>
<feature type="binding site" evidence="1">
    <location>
        <position position="156"/>
    </location>
    <ligand>
        <name>thiamine diphosphate</name>
        <dbReference type="ChEBI" id="CHEBI:58937"/>
    </ligand>
</feature>
<feature type="binding site" evidence="1">
    <location>
        <position position="185"/>
    </location>
    <ligand>
        <name>Mg(2+)</name>
        <dbReference type="ChEBI" id="CHEBI:18420"/>
    </ligand>
</feature>
<feature type="binding site" evidence="1">
    <location>
        <position position="185"/>
    </location>
    <ligand>
        <name>thiamine diphosphate</name>
        <dbReference type="ChEBI" id="CHEBI:58937"/>
    </ligand>
</feature>
<feature type="binding site" evidence="1">
    <location>
        <position position="187"/>
    </location>
    <ligand>
        <name>Mg(2+)</name>
        <dbReference type="ChEBI" id="CHEBI:18420"/>
    </ligand>
</feature>
<feature type="binding site" evidence="1">
    <location>
        <position position="260"/>
    </location>
    <ligand>
        <name>substrate</name>
    </ligand>
</feature>
<feature type="binding site" evidence="1">
    <location>
        <position position="260"/>
    </location>
    <ligand>
        <name>thiamine diphosphate</name>
        <dbReference type="ChEBI" id="CHEBI:58937"/>
    </ligand>
</feature>
<feature type="binding site" evidence="1">
    <location>
        <position position="357"/>
    </location>
    <ligand>
        <name>substrate</name>
    </ligand>
</feature>
<feature type="binding site" evidence="1">
    <location>
        <position position="384"/>
    </location>
    <ligand>
        <name>substrate</name>
    </ligand>
</feature>
<feature type="binding site" evidence="1">
    <location>
        <position position="437"/>
    </location>
    <ligand>
        <name>thiamine diphosphate</name>
        <dbReference type="ChEBI" id="CHEBI:58937"/>
    </ligand>
</feature>
<feature type="binding site" evidence="1">
    <location>
        <position position="461"/>
    </location>
    <ligand>
        <name>substrate</name>
    </ligand>
</feature>
<feature type="binding site" evidence="1">
    <location>
        <position position="469"/>
    </location>
    <ligand>
        <name>substrate</name>
    </ligand>
</feature>
<feature type="binding site" evidence="1">
    <location>
        <position position="520"/>
    </location>
    <ligand>
        <name>substrate</name>
    </ligand>
</feature>
<feature type="site" description="Important for catalytic activity" evidence="1">
    <location>
        <position position="26"/>
    </location>
</feature>
<feature type="site" description="Important for catalytic activity" evidence="1">
    <location>
        <position position="260"/>
    </location>
</feature>
<evidence type="ECO:0000250" key="1"/>
<evidence type="ECO:0000305" key="2"/>
<protein>
    <recommendedName>
        <fullName>Transketolase 1</fullName>
        <shortName>TK 1</shortName>
        <ecNumber>2.2.1.1</ecNumber>
    </recommendedName>
</protein>
<name>TKT1_ALIF1</name>
<accession>Q5E7R1</accession>